<proteinExistence type="inferred from homology"/>
<keyword id="KW-0328">Glycosyltransferase</keyword>
<keyword id="KW-0694">RNA-binding</keyword>
<keyword id="KW-0804">Transcription</keyword>
<keyword id="KW-0805">Transcription regulation</keyword>
<keyword id="KW-0806">Transcription termination</keyword>
<keyword id="KW-0808">Transferase</keyword>
<name>PYRR_LISMH</name>
<protein>
    <recommendedName>
        <fullName evidence="1">Bifunctional protein PyrR</fullName>
    </recommendedName>
    <domain>
        <recommendedName>
            <fullName evidence="1">Pyrimidine operon regulatory protein</fullName>
        </recommendedName>
    </domain>
    <domain>
        <recommendedName>
            <fullName evidence="1">Uracil phosphoribosyltransferase</fullName>
            <shortName evidence="1">UPRTase</shortName>
            <ecNumber evidence="1">2.4.2.9</ecNumber>
        </recommendedName>
    </domain>
</protein>
<evidence type="ECO:0000255" key="1">
    <source>
        <dbReference type="HAMAP-Rule" id="MF_01219"/>
    </source>
</evidence>
<feature type="chain" id="PRO_1000164849" description="Bifunctional protein PyrR">
    <location>
        <begin position="1"/>
        <end position="183"/>
    </location>
</feature>
<feature type="short sequence motif" description="PRPP-binding" evidence="1">
    <location>
        <begin position="102"/>
        <end position="114"/>
    </location>
</feature>
<gene>
    <name evidence="1" type="primary">pyrR</name>
    <name type="ordered locus">LMHCC_0716</name>
</gene>
<organism>
    <name type="scientific">Listeria monocytogenes serotype 4a (strain HCC23)</name>
    <dbReference type="NCBI Taxonomy" id="552536"/>
    <lineage>
        <taxon>Bacteria</taxon>
        <taxon>Bacillati</taxon>
        <taxon>Bacillota</taxon>
        <taxon>Bacilli</taxon>
        <taxon>Bacillales</taxon>
        <taxon>Listeriaceae</taxon>
        <taxon>Listeria</taxon>
    </lineage>
</organism>
<dbReference type="EC" id="2.4.2.9" evidence="1"/>
<dbReference type="EMBL" id="CP001175">
    <property type="protein sequence ID" value="ACK39071.1"/>
    <property type="molecule type" value="Genomic_DNA"/>
</dbReference>
<dbReference type="RefSeq" id="WP_003729510.1">
    <property type="nucleotide sequence ID" value="NC_011660.1"/>
</dbReference>
<dbReference type="SMR" id="B8DDR2"/>
<dbReference type="KEGG" id="lmh:LMHCC_0716"/>
<dbReference type="HOGENOM" id="CLU_094234_2_1_9"/>
<dbReference type="GO" id="GO:0003723">
    <property type="term" value="F:RNA binding"/>
    <property type="evidence" value="ECO:0007669"/>
    <property type="project" value="UniProtKB-UniRule"/>
</dbReference>
<dbReference type="GO" id="GO:0004845">
    <property type="term" value="F:uracil phosphoribosyltransferase activity"/>
    <property type="evidence" value="ECO:0007669"/>
    <property type="project" value="UniProtKB-UniRule"/>
</dbReference>
<dbReference type="GO" id="GO:0006353">
    <property type="term" value="P:DNA-templated transcription termination"/>
    <property type="evidence" value="ECO:0007669"/>
    <property type="project" value="UniProtKB-UniRule"/>
</dbReference>
<dbReference type="CDD" id="cd06223">
    <property type="entry name" value="PRTases_typeI"/>
    <property type="match status" value="1"/>
</dbReference>
<dbReference type="FunFam" id="3.40.50.2020:FF:000020">
    <property type="entry name" value="Bifunctional protein PyrR"/>
    <property type="match status" value="1"/>
</dbReference>
<dbReference type="Gene3D" id="3.40.50.2020">
    <property type="match status" value="1"/>
</dbReference>
<dbReference type="HAMAP" id="MF_01219">
    <property type="entry name" value="PyrR"/>
    <property type="match status" value="1"/>
</dbReference>
<dbReference type="InterPro" id="IPR000836">
    <property type="entry name" value="PRibTrfase_dom"/>
</dbReference>
<dbReference type="InterPro" id="IPR029057">
    <property type="entry name" value="PRTase-like"/>
</dbReference>
<dbReference type="InterPro" id="IPR023050">
    <property type="entry name" value="PyrR"/>
</dbReference>
<dbReference type="InterPro" id="IPR050137">
    <property type="entry name" value="PyrR_bifunctional"/>
</dbReference>
<dbReference type="NCBIfam" id="NF003545">
    <property type="entry name" value="PRK05205.1-1"/>
    <property type="match status" value="1"/>
</dbReference>
<dbReference type="NCBIfam" id="NF003548">
    <property type="entry name" value="PRK05205.1-4"/>
    <property type="match status" value="1"/>
</dbReference>
<dbReference type="NCBIfam" id="NF003549">
    <property type="entry name" value="PRK05205.1-5"/>
    <property type="match status" value="1"/>
</dbReference>
<dbReference type="PANTHER" id="PTHR11608">
    <property type="entry name" value="BIFUNCTIONAL PROTEIN PYRR"/>
    <property type="match status" value="1"/>
</dbReference>
<dbReference type="PANTHER" id="PTHR11608:SF0">
    <property type="entry name" value="BIFUNCTIONAL PROTEIN PYRR"/>
    <property type="match status" value="1"/>
</dbReference>
<dbReference type="Pfam" id="PF00156">
    <property type="entry name" value="Pribosyltran"/>
    <property type="match status" value="1"/>
</dbReference>
<dbReference type="SUPFAM" id="SSF53271">
    <property type="entry name" value="PRTase-like"/>
    <property type="match status" value="1"/>
</dbReference>
<reference key="1">
    <citation type="journal article" date="2011" name="J. Bacteriol.">
        <title>Genome sequence of lineage III Listeria monocytogenes strain HCC23.</title>
        <authorList>
            <person name="Steele C.L."/>
            <person name="Donaldson J.R."/>
            <person name="Paul D."/>
            <person name="Banes M.M."/>
            <person name="Arick T."/>
            <person name="Bridges S.M."/>
            <person name="Lawrence M.L."/>
        </authorList>
    </citation>
    <scope>NUCLEOTIDE SEQUENCE [LARGE SCALE GENOMIC DNA]</scope>
    <source>
        <strain>HCC23</strain>
    </source>
</reference>
<accession>B8DDR2</accession>
<sequence length="183" mass="20504">MQKQVVVMDEAAIKRALTRVSYEIIERNKGTKNLALVGIKTRGIYLAERLHKRILEIEGIDVPVGDIDITLYRDDLSFKDDKTREPAVHGTNIPFDINGKKVVLVDDVLYTGRTVRAAMDALMDVGRPAQIHLAVLADRGHRELPIRADYVGKNIPTSGNERVEVRLTDVDHAEDAVIINKNE</sequence>
<comment type="function">
    <text evidence="1">Regulates transcriptional attenuation of the pyrimidine nucleotide (pyr) operon by binding in a uridine-dependent manner to specific sites on pyr mRNA. This disrupts an antiterminator hairpin in the RNA and favors formation of a downstream transcription terminator, leading to a reduced expression of downstream genes.</text>
</comment>
<comment type="function">
    <text evidence="1">Also displays a weak uracil phosphoribosyltransferase activity which is not physiologically significant.</text>
</comment>
<comment type="catalytic activity">
    <reaction evidence="1">
        <text>UMP + diphosphate = 5-phospho-alpha-D-ribose 1-diphosphate + uracil</text>
        <dbReference type="Rhea" id="RHEA:13017"/>
        <dbReference type="ChEBI" id="CHEBI:17568"/>
        <dbReference type="ChEBI" id="CHEBI:33019"/>
        <dbReference type="ChEBI" id="CHEBI:57865"/>
        <dbReference type="ChEBI" id="CHEBI:58017"/>
        <dbReference type="EC" id="2.4.2.9"/>
    </reaction>
</comment>
<comment type="subunit">
    <text evidence="1">Homodimer and homohexamer; in equilibrium.</text>
</comment>
<comment type="similarity">
    <text evidence="1">Belongs to the purine/pyrimidine phosphoribosyltransferase family. PyrR subfamily.</text>
</comment>